<protein>
    <recommendedName>
        <fullName evidence="1">Deoxyguanosinetriphosphate triphosphohydrolase-like protein</fullName>
    </recommendedName>
</protein>
<keyword id="KW-0378">Hydrolase</keyword>
<keyword id="KW-1185">Reference proteome</keyword>
<reference key="1">
    <citation type="journal article" date="2010" name="Stand. Genomic Sci.">
        <title>Complete genome sequence of Rhizobium leguminosarum bv trifolii strain WSM2304, an effective microsymbiont of the South American clover Trifolium polymorphum.</title>
        <authorList>
            <person name="Reeve W."/>
            <person name="O'Hara G."/>
            <person name="Chain P."/>
            <person name="Ardley J."/>
            <person name="Brau L."/>
            <person name="Nandesena K."/>
            <person name="Tiwari R."/>
            <person name="Malfatti S."/>
            <person name="Kiss H."/>
            <person name="Lapidus A."/>
            <person name="Copeland A."/>
            <person name="Nolan M."/>
            <person name="Land M."/>
            <person name="Ivanova N."/>
            <person name="Mavromatis K."/>
            <person name="Markowitz V."/>
            <person name="Kyrpides N."/>
            <person name="Melino V."/>
            <person name="Denton M."/>
            <person name="Yates R."/>
            <person name="Howieson J."/>
        </authorList>
    </citation>
    <scope>NUCLEOTIDE SEQUENCE [LARGE SCALE GENOMIC DNA]</scope>
    <source>
        <strain>WSM2304</strain>
    </source>
</reference>
<name>DGTL1_RHILW</name>
<feature type="chain" id="PRO_1000138925" description="Deoxyguanosinetriphosphate triphosphohydrolase-like protein">
    <location>
        <begin position="1"/>
        <end position="405"/>
    </location>
</feature>
<feature type="domain" description="HD" evidence="2">
    <location>
        <begin position="75"/>
        <end position="219"/>
    </location>
</feature>
<evidence type="ECO:0000255" key="1">
    <source>
        <dbReference type="HAMAP-Rule" id="MF_01212"/>
    </source>
</evidence>
<evidence type="ECO:0000255" key="2">
    <source>
        <dbReference type="PROSITE-ProRule" id="PRU01175"/>
    </source>
</evidence>
<organism>
    <name type="scientific">Rhizobium leguminosarum bv. trifolii (strain WSM2304)</name>
    <dbReference type="NCBI Taxonomy" id="395492"/>
    <lineage>
        <taxon>Bacteria</taxon>
        <taxon>Pseudomonadati</taxon>
        <taxon>Pseudomonadota</taxon>
        <taxon>Alphaproteobacteria</taxon>
        <taxon>Hyphomicrobiales</taxon>
        <taxon>Rhizobiaceae</taxon>
        <taxon>Rhizobium/Agrobacterium group</taxon>
        <taxon>Rhizobium</taxon>
    </lineage>
</organism>
<dbReference type="EMBL" id="CP001191">
    <property type="protein sequence ID" value="ACI54773.1"/>
    <property type="molecule type" value="Genomic_DNA"/>
</dbReference>
<dbReference type="RefSeq" id="WP_012557479.1">
    <property type="nucleotide sequence ID" value="NC_011369.1"/>
</dbReference>
<dbReference type="SMR" id="B5ZMF1"/>
<dbReference type="STRING" id="395492.Rleg2_1481"/>
<dbReference type="KEGG" id="rlt:Rleg2_1481"/>
<dbReference type="eggNOG" id="COG0232">
    <property type="taxonomic scope" value="Bacteria"/>
</dbReference>
<dbReference type="HOGENOM" id="CLU_028163_1_0_5"/>
<dbReference type="Proteomes" id="UP000008330">
    <property type="component" value="Chromosome"/>
</dbReference>
<dbReference type="GO" id="GO:0008832">
    <property type="term" value="F:dGTPase activity"/>
    <property type="evidence" value="ECO:0007669"/>
    <property type="project" value="TreeGrafter"/>
</dbReference>
<dbReference type="GO" id="GO:0006203">
    <property type="term" value="P:dGTP catabolic process"/>
    <property type="evidence" value="ECO:0007669"/>
    <property type="project" value="TreeGrafter"/>
</dbReference>
<dbReference type="CDD" id="cd00077">
    <property type="entry name" value="HDc"/>
    <property type="match status" value="1"/>
</dbReference>
<dbReference type="Gene3D" id="1.10.3210.10">
    <property type="entry name" value="Hypothetical protein af1432"/>
    <property type="match status" value="1"/>
</dbReference>
<dbReference type="HAMAP" id="MF_01212">
    <property type="entry name" value="dGTPase_type2"/>
    <property type="match status" value="1"/>
</dbReference>
<dbReference type="InterPro" id="IPR006261">
    <property type="entry name" value="dGTPase"/>
</dbReference>
<dbReference type="InterPro" id="IPR050135">
    <property type="entry name" value="dGTPase-like"/>
</dbReference>
<dbReference type="InterPro" id="IPR023023">
    <property type="entry name" value="dNTPase_2"/>
</dbReference>
<dbReference type="InterPro" id="IPR003607">
    <property type="entry name" value="HD/PDEase_dom"/>
</dbReference>
<dbReference type="InterPro" id="IPR006674">
    <property type="entry name" value="HD_domain"/>
</dbReference>
<dbReference type="InterPro" id="IPR026875">
    <property type="entry name" value="PHydrolase_assoc_dom"/>
</dbReference>
<dbReference type="NCBIfam" id="TIGR01353">
    <property type="entry name" value="dGTP_triPase"/>
    <property type="match status" value="1"/>
</dbReference>
<dbReference type="NCBIfam" id="NF002326">
    <property type="entry name" value="PRK01286.1-1"/>
    <property type="match status" value="1"/>
</dbReference>
<dbReference type="NCBIfam" id="NF002328">
    <property type="entry name" value="PRK01286.1-3"/>
    <property type="match status" value="1"/>
</dbReference>
<dbReference type="PANTHER" id="PTHR11373:SF43">
    <property type="entry name" value="DEOXYGUANOSINETRIPHOSPHATE TRIPHOSPHOHYDROLASE-LIKE PROTEIN"/>
    <property type="match status" value="1"/>
</dbReference>
<dbReference type="PANTHER" id="PTHR11373">
    <property type="entry name" value="DEOXYNUCLEOSIDE TRIPHOSPHATE TRIPHOSPHOHYDROLASE"/>
    <property type="match status" value="1"/>
</dbReference>
<dbReference type="Pfam" id="PF01966">
    <property type="entry name" value="HD"/>
    <property type="match status" value="1"/>
</dbReference>
<dbReference type="Pfam" id="PF13286">
    <property type="entry name" value="HD_assoc"/>
    <property type="match status" value="1"/>
</dbReference>
<dbReference type="SMART" id="SM00471">
    <property type="entry name" value="HDc"/>
    <property type="match status" value="1"/>
</dbReference>
<dbReference type="SUPFAM" id="SSF109604">
    <property type="entry name" value="HD-domain/PDEase-like"/>
    <property type="match status" value="1"/>
</dbReference>
<dbReference type="PROSITE" id="PS51831">
    <property type="entry name" value="HD"/>
    <property type="match status" value="1"/>
</dbReference>
<accession>B5ZMF1</accession>
<gene>
    <name type="ordered locus">Rleg2_1481</name>
</gene>
<proteinExistence type="inferred from homology"/>
<sequence>MTIDTRALGFGSSDRAVYAADPWTSRGRLYPEDGSPTRSDFQRDRDRIVHTTAFRRLKHKTQVFIAQDGDHYRTRLTHTIEVAQIARALARALKLDEDLAEGVALVHDFGHTPFGHTGEDALHEVLLPYGGFDHNAQSLRIVTKLERRYAEFDGINLTWESLEGLVKHNGPLLTPDDVGTRGPVPQPILDYCELHDLELATYASLEAQVAAIADDIAYNTHDIDDGLRSGYLTFDMLEEIPFLAGLMAEVRARYPHLEPSRFTHEIMRRQITRMVEDVIAVAQERLSLLRPESAADIRAADRVIAAFSGQMAETDSQIKAMLFKRIYRNPDIMRIRAGAAQIVTDLFAAYMANPKEMQSHYWVDHIAGLADAPKARHVGDYLAGMTDTYAISAHRRLFDHTPDLR</sequence>
<comment type="similarity">
    <text evidence="1">Belongs to the dGTPase family. Type 2 subfamily.</text>
</comment>